<reference key="1">
    <citation type="submission" date="2007-08" db="EMBL/GenBank/DDBJ databases">
        <authorList>
            <consortium name="The Vibrio harveyi Genome Sequencing Project"/>
            <person name="Bassler B."/>
            <person name="Clifton S.W."/>
            <person name="Fulton L."/>
            <person name="Delehaunty K."/>
            <person name="Fronick C."/>
            <person name="Harrison M."/>
            <person name="Markivic C."/>
            <person name="Fulton R."/>
            <person name="Tin-Wollam A.-M."/>
            <person name="Shah N."/>
            <person name="Pepin K."/>
            <person name="Nash W."/>
            <person name="Thiruvilangam P."/>
            <person name="Bhonagiri V."/>
            <person name="Waters C."/>
            <person name="Tu K.C."/>
            <person name="Irgon J."/>
            <person name="Wilson R.K."/>
        </authorList>
    </citation>
    <scope>NUCLEOTIDE SEQUENCE [LARGE SCALE GENOMIC DNA]</scope>
    <source>
        <strain>ATCC BAA-1116 / BB120</strain>
    </source>
</reference>
<comment type="function">
    <text evidence="1">Involved in transcription antitermination. Required for transcription of ribosomal RNA (rRNA) genes. Binds specifically to the boxA antiterminator sequence of the ribosomal RNA (rrn) operons.</text>
</comment>
<comment type="similarity">
    <text evidence="1">Belongs to the NusB family.</text>
</comment>
<evidence type="ECO:0000255" key="1">
    <source>
        <dbReference type="HAMAP-Rule" id="MF_00073"/>
    </source>
</evidence>
<organism>
    <name type="scientific">Vibrio campbellii (strain ATCC BAA-1116)</name>
    <dbReference type="NCBI Taxonomy" id="2902295"/>
    <lineage>
        <taxon>Bacteria</taxon>
        <taxon>Pseudomonadati</taxon>
        <taxon>Pseudomonadota</taxon>
        <taxon>Gammaproteobacteria</taxon>
        <taxon>Vibrionales</taxon>
        <taxon>Vibrionaceae</taxon>
        <taxon>Vibrio</taxon>
    </lineage>
</organism>
<dbReference type="EMBL" id="CP000789">
    <property type="protein sequence ID" value="ABU70160.1"/>
    <property type="molecule type" value="Genomic_DNA"/>
</dbReference>
<dbReference type="RefSeq" id="WP_005440182.1">
    <property type="nucleotide sequence ID" value="NC_022269.1"/>
</dbReference>
<dbReference type="SMR" id="A7MWU1"/>
<dbReference type="GeneID" id="83582725"/>
<dbReference type="KEGG" id="vha:VIBHAR_01170"/>
<dbReference type="PATRIC" id="fig|338187.25.peg.1459"/>
<dbReference type="Proteomes" id="UP000008152">
    <property type="component" value="Chromosome I"/>
</dbReference>
<dbReference type="GO" id="GO:0005829">
    <property type="term" value="C:cytosol"/>
    <property type="evidence" value="ECO:0007669"/>
    <property type="project" value="TreeGrafter"/>
</dbReference>
<dbReference type="GO" id="GO:0003723">
    <property type="term" value="F:RNA binding"/>
    <property type="evidence" value="ECO:0007669"/>
    <property type="project" value="UniProtKB-UniRule"/>
</dbReference>
<dbReference type="GO" id="GO:0006353">
    <property type="term" value="P:DNA-templated transcription termination"/>
    <property type="evidence" value="ECO:0007669"/>
    <property type="project" value="UniProtKB-UniRule"/>
</dbReference>
<dbReference type="GO" id="GO:0031564">
    <property type="term" value="P:transcription antitermination"/>
    <property type="evidence" value="ECO:0007669"/>
    <property type="project" value="UniProtKB-KW"/>
</dbReference>
<dbReference type="FunFam" id="1.10.940.10:FF:000001">
    <property type="entry name" value="Transcription antitermination factor NusB"/>
    <property type="match status" value="1"/>
</dbReference>
<dbReference type="Gene3D" id="1.10.940.10">
    <property type="entry name" value="NusB-like"/>
    <property type="match status" value="1"/>
</dbReference>
<dbReference type="HAMAP" id="MF_00073">
    <property type="entry name" value="NusB"/>
    <property type="match status" value="1"/>
</dbReference>
<dbReference type="InterPro" id="IPR035926">
    <property type="entry name" value="NusB-like_sf"/>
</dbReference>
<dbReference type="InterPro" id="IPR011605">
    <property type="entry name" value="NusB_fam"/>
</dbReference>
<dbReference type="InterPro" id="IPR006027">
    <property type="entry name" value="NusB_RsmB_TIM44"/>
</dbReference>
<dbReference type="NCBIfam" id="TIGR01951">
    <property type="entry name" value="nusB"/>
    <property type="match status" value="1"/>
</dbReference>
<dbReference type="PANTHER" id="PTHR11078:SF3">
    <property type="entry name" value="ANTITERMINATION NUSB DOMAIN-CONTAINING PROTEIN"/>
    <property type="match status" value="1"/>
</dbReference>
<dbReference type="PANTHER" id="PTHR11078">
    <property type="entry name" value="N UTILIZATION SUBSTANCE PROTEIN B-RELATED"/>
    <property type="match status" value="1"/>
</dbReference>
<dbReference type="Pfam" id="PF01029">
    <property type="entry name" value="NusB"/>
    <property type="match status" value="1"/>
</dbReference>
<dbReference type="SUPFAM" id="SSF48013">
    <property type="entry name" value="NusB-like"/>
    <property type="match status" value="1"/>
</dbReference>
<accession>A7MWU1</accession>
<feature type="chain" id="PRO_1000023786" description="Transcription antitermination protein NusB">
    <location>
        <begin position="1"/>
        <end position="155"/>
    </location>
</feature>
<keyword id="KW-0694">RNA-binding</keyword>
<keyword id="KW-0804">Transcription</keyword>
<keyword id="KW-0889">Transcription antitermination</keyword>
<keyword id="KW-0805">Transcription regulation</keyword>
<sequence length="155" mass="17553">MGASVKPAARRNARQFALQAIYSWQITKDNVATIEEQFLSGDKYDEEELHASEPALAAPETDVAYFRELLSGVVLSHSELDSKIRPYVSRPMQDLDMMELALLRLAMYEMTRREDVPYKVVINEAIELAKVFAAEDSHKFVNGVLDKAAPHVRKK</sequence>
<protein>
    <recommendedName>
        <fullName evidence="1">Transcription antitermination protein NusB</fullName>
    </recommendedName>
    <alternativeName>
        <fullName evidence="1">Antitermination factor NusB</fullName>
    </alternativeName>
</protein>
<name>NUSB_VIBC1</name>
<proteinExistence type="inferred from homology"/>
<gene>
    <name evidence="1" type="primary">nusB</name>
    <name type="ordered locus">VIBHAR_01170</name>
</gene>